<evidence type="ECO:0000250" key="1"/>
<evidence type="ECO:0000255" key="2"/>
<evidence type="ECO:0000305" key="3"/>
<keyword id="KW-0445">Lipid transport</keyword>
<keyword id="KW-1185">Reference proteome</keyword>
<keyword id="KW-0732">Signal</keyword>
<keyword id="KW-0813">Transport</keyword>
<feature type="signal peptide" evidence="2">
    <location>
        <begin position="1"/>
        <end position="21"/>
    </location>
</feature>
<feature type="propeptide" id="PRO_0000019893" evidence="1">
    <location>
        <begin position="22"/>
        <end position="54"/>
    </location>
</feature>
<feature type="chain" id="PRO_0000019894" description="Phosphatidylglycerol/phosphatidylinositol transfer protein">
    <location>
        <begin position="55"/>
        <end position="193"/>
    </location>
</feature>
<sequence length="193" mass="20795">MHSRFIAVTLASLSLASQAVAWGCIGQDCNQAADQIAFSAPEPASYEGKVKSLAWEPTPGQGWQWSSCGTGDEVVNVESIVVSPDPPVPGQNLTVRAKGTVKDEVSDGTFADVIVKLGLIRLLARRFDVCEQARESNADLQCPLSAGEYELEHTVALPREIPPGKFNVHITGENQDGSNLLCLDLSIQFGFRR</sequence>
<gene>
    <name type="primary">NPC2</name>
    <name type="ORF">UMAG_04733</name>
</gene>
<proteinExistence type="inferred from homology"/>
<comment type="function">
    <text evidence="1">Catalyzes the intermembrane transfer of phosphatidylglycerol and phosphatidylinositol.</text>
</comment>
<comment type="subunit">
    <text evidence="1">Monomer.</text>
</comment>
<comment type="similarity">
    <text evidence="3">Belongs to the NPC2 family.</text>
</comment>
<accession>Q4P580</accession>
<accession>A0A0D1DW04</accession>
<dbReference type="EMBL" id="CM003156">
    <property type="protein sequence ID" value="KIS66670.1"/>
    <property type="molecule type" value="Genomic_DNA"/>
</dbReference>
<dbReference type="RefSeq" id="XP_011391615.1">
    <property type="nucleotide sequence ID" value="XM_011393313.1"/>
</dbReference>
<dbReference type="SMR" id="Q4P580"/>
<dbReference type="FunCoup" id="Q4P580">
    <property type="interactions" value="1"/>
</dbReference>
<dbReference type="STRING" id="237631.Q4P580"/>
<dbReference type="EnsemblFungi" id="KIS66670">
    <property type="protein sequence ID" value="KIS66670"/>
    <property type="gene ID" value="UMAG_04733"/>
</dbReference>
<dbReference type="GeneID" id="23564819"/>
<dbReference type="KEGG" id="uma:UMAG_04733"/>
<dbReference type="VEuPathDB" id="FungiDB:UMAG_04733"/>
<dbReference type="eggNOG" id="KOG4680">
    <property type="taxonomic scope" value="Eukaryota"/>
</dbReference>
<dbReference type="HOGENOM" id="CLU_097982_3_0_1"/>
<dbReference type="InParanoid" id="Q4P580"/>
<dbReference type="OMA" id="HQTYDLC"/>
<dbReference type="OrthoDB" id="6409159at2759"/>
<dbReference type="Proteomes" id="UP000000561">
    <property type="component" value="Chromosome 17"/>
</dbReference>
<dbReference type="GO" id="GO:0032934">
    <property type="term" value="F:sterol binding"/>
    <property type="evidence" value="ECO:0000318"/>
    <property type="project" value="GO_Central"/>
</dbReference>
<dbReference type="GO" id="GO:0032366">
    <property type="term" value="P:intracellular sterol transport"/>
    <property type="evidence" value="ECO:0007669"/>
    <property type="project" value="InterPro"/>
</dbReference>
<dbReference type="GO" id="GO:0015918">
    <property type="term" value="P:sterol transport"/>
    <property type="evidence" value="ECO:0000318"/>
    <property type="project" value="GO_Central"/>
</dbReference>
<dbReference type="CDD" id="cd00917">
    <property type="entry name" value="PG-PI_TP"/>
    <property type="match status" value="1"/>
</dbReference>
<dbReference type="FunFam" id="2.70.220.10:FF:000002">
    <property type="entry name" value="Phosphatidylglycerol/phosphatidylinositol transfer protein"/>
    <property type="match status" value="1"/>
</dbReference>
<dbReference type="FunFam" id="2.70.220.10:FF:000004">
    <property type="entry name" value="Related to phosphatidylglycerol/phosphatidylinositol transfer protein"/>
    <property type="match status" value="1"/>
</dbReference>
<dbReference type="Gene3D" id="2.70.220.10">
    <property type="entry name" value="Ganglioside GM2 activator"/>
    <property type="match status" value="2"/>
</dbReference>
<dbReference type="InterPro" id="IPR036846">
    <property type="entry name" value="GM2-AP_sf"/>
</dbReference>
<dbReference type="InterPro" id="IPR014756">
    <property type="entry name" value="Ig_E-set"/>
</dbReference>
<dbReference type="InterPro" id="IPR003172">
    <property type="entry name" value="ML_dom"/>
</dbReference>
<dbReference type="InterPro" id="IPR033917">
    <property type="entry name" value="ML_PG-PI_TP"/>
</dbReference>
<dbReference type="InterPro" id="IPR039670">
    <property type="entry name" value="NPC2-like"/>
</dbReference>
<dbReference type="PANTHER" id="PTHR11306">
    <property type="entry name" value="NIEMANN PICK TYPE C2 PROTEIN NPC2-RELATED"/>
    <property type="match status" value="1"/>
</dbReference>
<dbReference type="PANTHER" id="PTHR11306:SF0">
    <property type="entry name" value="PHOSPHATIDYLGLYCEROL_PHOSPHATIDYLINOSITOL TRANSFER PROTEIN"/>
    <property type="match status" value="1"/>
</dbReference>
<dbReference type="Pfam" id="PF02221">
    <property type="entry name" value="E1_DerP2_DerF2"/>
    <property type="match status" value="1"/>
</dbReference>
<dbReference type="SMART" id="SM00737">
    <property type="entry name" value="ML"/>
    <property type="match status" value="1"/>
</dbReference>
<dbReference type="SUPFAM" id="SSF81296">
    <property type="entry name" value="E set domains"/>
    <property type="match status" value="1"/>
</dbReference>
<reference key="1">
    <citation type="journal article" date="2006" name="Nature">
        <title>Insights from the genome of the biotrophic fungal plant pathogen Ustilago maydis.</title>
        <authorList>
            <person name="Kaemper J."/>
            <person name="Kahmann R."/>
            <person name="Boelker M."/>
            <person name="Ma L.-J."/>
            <person name="Brefort T."/>
            <person name="Saville B.J."/>
            <person name="Banuett F."/>
            <person name="Kronstad J.W."/>
            <person name="Gold S.E."/>
            <person name="Mueller O."/>
            <person name="Perlin M.H."/>
            <person name="Woesten H.A.B."/>
            <person name="de Vries R."/>
            <person name="Ruiz-Herrera J."/>
            <person name="Reynaga-Pena C.G."/>
            <person name="Snetselaar K."/>
            <person name="McCann M."/>
            <person name="Perez-Martin J."/>
            <person name="Feldbruegge M."/>
            <person name="Basse C.W."/>
            <person name="Steinberg G."/>
            <person name="Ibeas J.I."/>
            <person name="Holloman W."/>
            <person name="Guzman P."/>
            <person name="Farman M.L."/>
            <person name="Stajich J.E."/>
            <person name="Sentandreu R."/>
            <person name="Gonzalez-Prieto J.M."/>
            <person name="Kennell J.C."/>
            <person name="Molina L."/>
            <person name="Schirawski J."/>
            <person name="Mendoza-Mendoza A."/>
            <person name="Greilinger D."/>
            <person name="Muench K."/>
            <person name="Roessel N."/>
            <person name="Scherer M."/>
            <person name="Vranes M."/>
            <person name="Ladendorf O."/>
            <person name="Vincon V."/>
            <person name="Fuchs U."/>
            <person name="Sandrock B."/>
            <person name="Meng S."/>
            <person name="Ho E.C.H."/>
            <person name="Cahill M.J."/>
            <person name="Boyce K.J."/>
            <person name="Klose J."/>
            <person name="Klosterman S.J."/>
            <person name="Deelstra H.J."/>
            <person name="Ortiz-Castellanos L."/>
            <person name="Li W."/>
            <person name="Sanchez-Alonso P."/>
            <person name="Schreier P.H."/>
            <person name="Haeuser-Hahn I."/>
            <person name="Vaupel M."/>
            <person name="Koopmann E."/>
            <person name="Friedrich G."/>
            <person name="Voss H."/>
            <person name="Schlueter T."/>
            <person name="Margolis J."/>
            <person name="Platt D."/>
            <person name="Swimmer C."/>
            <person name="Gnirke A."/>
            <person name="Chen F."/>
            <person name="Vysotskaia V."/>
            <person name="Mannhaupt G."/>
            <person name="Gueldener U."/>
            <person name="Muensterkoetter M."/>
            <person name="Haase D."/>
            <person name="Oesterheld M."/>
            <person name="Mewes H.-W."/>
            <person name="Mauceli E.W."/>
            <person name="DeCaprio D."/>
            <person name="Wade C.M."/>
            <person name="Butler J."/>
            <person name="Young S.K."/>
            <person name="Jaffe D.B."/>
            <person name="Calvo S.E."/>
            <person name="Nusbaum C."/>
            <person name="Galagan J.E."/>
            <person name="Birren B.W."/>
        </authorList>
    </citation>
    <scope>NUCLEOTIDE SEQUENCE [LARGE SCALE GENOMIC DNA]</scope>
    <source>
        <strain>DSM 14603 / FGSC 9021 / UM521</strain>
    </source>
</reference>
<reference key="2">
    <citation type="submission" date="2014-09" db="EMBL/GenBank/DDBJ databases">
        <authorList>
            <person name="Gueldener U."/>
            <person name="Muensterkoetter M."/>
            <person name="Walter M.C."/>
            <person name="Mannhaupt G."/>
            <person name="Kahmann R."/>
        </authorList>
    </citation>
    <scope>GENOME REANNOTATION</scope>
    <source>
        <strain>DSM 14603 / FGSC 9021 / UM521</strain>
    </source>
</reference>
<organism>
    <name type="scientific">Mycosarcoma maydis</name>
    <name type="common">Corn smut fungus</name>
    <name type="synonym">Ustilago maydis</name>
    <dbReference type="NCBI Taxonomy" id="5270"/>
    <lineage>
        <taxon>Eukaryota</taxon>
        <taxon>Fungi</taxon>
        <taxon>Dikarya</taxon>
        <taxon>Basidiomycota</taxon>
        <taxon>Ustilaginomycotina</taxon>
        <taxon>Ustilaginomycetes</taxon>
        <taxon>Ustilaginales</taxon>
        <taxon>Ustilaginaceae</taxon>
        <taxon>Mycosarcoma</taxon>
    </lineage>
</organism>
<name>NPC2_MYCMD</name>
<protein>
    <recommendedName>
        <fullName>Phosphatidylglycerol/phosphatidylinositol transfer protein</fullName>
        <shortName>PG/PI-TP</shortName>
    </recommendedName>
</protein>